<dbReference type="EC" id="2.3.1.47" evidence="1"/>
<dbReference type="EMBL" id="CU633749">
    <property type="protein sequence ID" value="CAP62797.1"/>
    <property type="molecule type" value="Genomic_DNA"/>
</dbReference>
<dbReference type="RefSeq" id="WP_012351465.1">
    <property type="nucleotide sequence ID" value="NC_010528.1"/>
</dbReference>
<dbReference type="SMR" id="B2AG98"/>
<dbReference type="GeneID" id="29762809"/>
<dbReference type="KEGG" id="cti:RALTA_A0124"/>
<dbReference type="eggNOG" id="COG0156">
    <property type="taxonomic scope" value="Bacteria"/>
</dbReference>
<dbReference type="HOGENOM" id="CLU_015846_11_2_4"/>
<dbReference type="BioCyc" id="CTAI977880:RALTA_RS00615-MONOMER"/>
<dbReference type="UniPathway" id="UPA00078"/>
<dbReference type="Proteomes" id="UP000001692">
    <property type="component" value="Chromosome 1"/>
</dbReference>
<dbReference type="GO" id="GO:0008710">
    <property type="term" value="F:8-amino-7-oxononanoate synthase activity"/>
    <property type="evidence" value="ECO:0007669"/>
    <property type="project" value="UniProtKB-UniRule"/>
</dbReference>
<dbReference type="GO" id="GO:0030170">
    <property type="term" value="F:pyridoxal phosphate binding"/>
    <property type="evidence" value="ECO:0007669"/>
    <property type="project" value="UniProtKB-UniRule"/>
</dbReference>
<dbReference type="GO" id="GO:0009102">
    <property type="term" value="P:biotin biosynthetic process"/>
    <property type="evidence" value="ECO:0007669"/>
    <property type="project" value="UniProtKB-UniRule"/>
</dbReference>
<dbReference type="Gene3D" id="3.90.1150.10">
    <property type="entry name" value="Aspartate Aminotransferase, domain 1"/>
    <property type="match status" value="1"/>
</dbReference>
<dbReference type="Gene3D" id="3.40.640.10">
    <property type="entry name" value="Type I PLP-dependent aspartate aminotransferase-like (Major domain)"/>
    <property type="match status" value="1"/>
</dbReference>
<dbReference type="HAMAP" id="MF_01693">
    <property type="entry name" value="BioF_aminotrans_2"/>
    <property type="match status" value="1"/>
</dbReference>
<dbReference type="InterPro" id="IPR004839">
    <property type="entry name" value="Aminotransferase_I/II_large"/>
</dbReference>
<dbReference type="InterPro" id="IPR050087">
    <property type="entry name" value="AON_synthase_class-II"/>
</dbReference>
<dbReference type="InterPro" id="IPR004723">
    <property type="entry name" value="AONS_Archaea/Proteobacteria"/>
</dbReference>
<dbReference type="InterPro" id="IPR022834">
    <property type="entry name" value="AONS_Proteobacteria"/>
</dbReference>
<dbReference type="InterPro" id="IPR015424">
    <property type="entry name" value="PyrdxlP-dep_Trfase"/>
</dbReference>
<dbReference type="InterPro" id="IPR015421">
    <property type="entry name" value="PyrdxlP-dep_Trfase_major"/>
</dbReference>
<dbReference type="InterPro" id="IPR015422">
    <property type="entry name" value="PyrdxlP-dep_Trfase_small"/>
</dbReference>
<dbReference type="NCBIfam" id="TIGR00858">
    <property type="entry name" value="bioF"/>
    <property type="match status" value="1"/>
</dbReference>
<dbReference type="PANTHER" id="PTHR13693:SF100">
    <property type="entry name" value="8-AMINO-7-OXONONANOATE SYNTHASE"/>
    <property type="match status" value="1"/>
</dbReference>
<dbReference type="PANTHER" id="PTHR13693">
    <property type="entry name" value="CLASS II AMINOTRANSFERASE/8-AMINO-7-OXONONANOATE SYNTHASE"/>
    <property type="match status" value="1"/>
</dbReference>
<dbReference type="Pfam" id="PF00155">
    <property type="entry name" value="Aminotran_1_2"/>
    <property type="match status" value="1"/>
</dbReference>
<dbReference type="SUPFAM" id="SSF53383">
    <property type="entry name" value="PLP-dependent transferases"/>
    <property type="match status" value="1"/>
</dbReference>
<gene>
    <name evidence="1" type="primary">bioF</name>
    <name type="ordered locus">RALTA_A0124</name>
</gene>
<protein>
    <recommendedName>
        <fullName evidence="1">8-amino-7-oxononanoate synthase</fullName>
        <shortName evidence="1">AONS</shortName>
        <ecNumber evidence="1">2.3.1.47</ecNumber>
    </recommendedName>
    <alternativeName>
        <fullName evidence="1">7-keto-8-amino-pelargonic acid synthase</fullName>
        <shortName evidence="1">7-KAP synthase</shortName>
        <shortName evidence="1">KAPA synthase</shortName>
    </alternativeName>
    <alternativeName>
        <fullName evidence="1">8-amino-7-ketopelargonate synthase</fullName>
    </alternativeName>
</protein>
<comment type="function">
    <text evidence="1">Catalyzes the decarboxylative condensation of pimeloyl-[acyl-carrier protein] and L-alanine to produce 8-amino-7-oxononanoate (AON), [acyl-carrier protein], and carbon dioxide.</text>
</comment>
<comment type="catalytic activity">
    <reaction evidence="1">
        <text>6-carboxyhexanoyl-[ACP] + L-alanine + H(+) = (8S)-8-amino-7-oxononanoate + holo-[ACP] + CO2</text>
        <dbReference type="Rhea" id="RHEA:42288"/>
        <dbReference type="Rhea" id="RHEA-COMP:9685"/>
        <dbReference type="Rhea" id="RHEA-COMP:9955"/>
        <dbReference type="ChEBI" id="CHEBI:15378"/>
        <dbReference type="ChEBI" id="CHEBI:16526"/>
        <dbReference type="ChEBI" id="CHEBI:57972"/>
        <dbReference type="ChEBI" id="CHEBI:64479"/>
        <dbReference type="ChEBI" id="CHEBI:78846"/>
        <dbReference type="ChEBI" id="CHEBI:149468"/>
        <dbReference type="EC" id="2.3.1.47"/>
    </reaction>
</comment>
<comment type="cofactor">
    <cofactor evidence="1">
        <name>pyridoxal 5'-phosphate</name>
        <dbReference type="ChEBI" id="CHEBI:597326"/>
    </cofactor>
</comment>
<comment type="pathway">
    <text evidence="1">Cofactor biosynthesis; biotin biosynthesis.</text>
</comment>
<comment type="subunit">
    <text evidence="1">Homodimer.</text>
</comment>
<comment type="similarity">
    <text evidence="1">Belongs to the class-II pyridoxal-phosphate-dependent aminotransferase family. BioF subfamily.</text>
</comment>
<keyword id="KW-0093">Biotin biosynthesis</keyword>
<keyword id="KW-0663">Pyridoxal phosphate</keyword>
<keyword id="KW-0808">Transferase</keyword>
<evidence type="ECO:0000255" key="1">
    <source>
        <dbReference type="HAMAP-Rule" id="MF_01693"/>
    </source>
</evidence>
<name>BIOF_CUPTR</name>
<reference key="1">
    <citation type="journal article" date="2008" name="Genome Res.">
        <title>Genome sequence of the beta-rhizobium Cupriavidus taiwanensis and comparative genomics of rhizobia.</title>
        <authorList>
            <person name="Amadou C."/>
            <person name="Pascal G."/>
            <person name="Mangenot S."/>
            <person name="Glew M."/>
            <person name="Bontemps C."/>
            <person name="Capela D."/>
            <person name="Carrere S."/>
            <person name="Cruveiller S."/>
            <person name="Dossat C."/>
            <person name="Lajus A."/>
            <person name="Marchetti M."/>
            <person name="Poinsot V."/>
            <person name="Rouy Z."/>
            <person name="Servin B."/>
            <person name="Saad M."/>
            <person name="Schenowitz C."/>
            <person name="Barbe V."/>
            <person name="Batut J."/>
            <person name="Medigue C."/>
            <person name="Masson-Boivin C."/>
        </authorList>
    </citation>
    <scope>NUCLEOTIDE SEQUENCE [LARGE SCALE GENOMIC DNA]</scope>
    <source>
        <strain>DSM 17343 / BCRC 17206 / CCUG 44338 / CIP 107171 / LMG 19424 / R1</strain>
    </source>
</reference>
<organism>
    <name type="scientific">Cupriavidus taiwanensis (strain DSM 17343 / BCRC 17206 / CCUG 44338 / CIP 107171 / LMG 19424 / R1)</name>
    <name type="common">Ralstonia taiwanensis (strain LMG 19424)</name>
    <dbReference type="NCBI Taxonomy" id="977880"/>
    <lineage>
        <taxon>Bacteria</taxon>
        <taxon>Pseudomonadati</taxon>
        <taxon>Pseudomonadota</taxon>
        <taxon>Betaproteobacteria</taxon>
        <taxon>Burkholderiales</taxon>
        <taxon>Burkholderiaceae</taxon>
        <taxon>Cupriavidus</taxon>
    </lineage>
</organism>
<proteinExistence type="inferred from homology"/>
<feature type="chain" id="PRO_0000380958" description="8-amino-7-oxononanoate synthase">
    <location>
        <begin position="1"/>
        <end position="404"/>
    </location>
</feature>
<feature type="binding site" evidence="1">
    <location>
        <position position="20"/>
    </location>
    <ligand>
        <name>substrate</name>
    </ligand>
</feature>
<feature type="binding site" evidence="1">
    <location>
        <begin position="116"/>
        <end position="117"/>
    </location>
    <ligand>
        <name>pyridoxal 5'-phosphate</name>
        <dbReference type="ChEBI" id="CHEBI:597326"/>
    </ligand>
</feature>
<feature type="binding site" evidence="1">
    <location>
        <position position="141"/>
    </location>
    <ligand>
        <name>substrate</name>
    </ligand>
</feature>
<feature type="binding site" evidence="1">
    <location>
        <position position="187"/>
    </location>
    <ligand>
        <name>pyridoxal 5'-phosphate</name>
        <dbReference type="ChEBI" id="CHEBI:597326"/>
    </ligand>
</feature>
<feature type="binding site" evidence="1">
    <location>
        <position position="215"/>
    </location>
    <ligand>
        <name>pyridoxal 5'-phosphate</name>
        <dbReference type="ChEBI" id="CHEBI:597326"/>
    </ligand>
</feature>
<feature type="binding site" evidence="1">
    <location>
        <position position="243"/>
    </location>
    <ligand>
        <name>pyridoxal 5'-phosphate</name>
        <dbReference type="ChEBI" id="CHEBI:597326"/>
    </ligand>
</feature>
<feature type="binding site" evidence="1">
    <location>
        <position position="366"/>
    </location>
    <ligand>
        <name>substrate</name>
    </ligand>
</feature>
<feature type="modified residue" description="N6-(pyridoxal phosphate)lysine" evidence="1">
    <location>
        <position position="246"/>
    </location>
</feature>
<accession>B2AG98</accession>
<sequence>MLLEQLKQAAEQRHALALTRRRRIAHTACAPHQAVGEEGTESESLLTFCSNDYLGLANHPQVIAALVEGAQRYGAGSGASHLVSGHSLAHAQLEAELARWFAPHIAQARTLYFCTGYMANMAVLTALGAAGATLFCESLNHASLIDGARLARADVQRYPHCDTDALQALLAASTSARKLIVTDSVFSMDGNVAPLRRLLELAERHDAWIVVDDAHGFGVLGEQGHGVLEALGLSSERLIYIGTLGKAAGVAGAFVAAHATIIEHLVNTARPYIYTTAAPPAVAHALLASLAIIEGDEGRQRRAQLARCIATLREGLAQLAASAGWTLGDSQTAVQPLIVGDNGAALALSAALEADGIRVGAIRPPTVPEGTARLRITLSAAHTEADVRRLLEALSAAVAQREAA</sequence>